<protein>
    <recommendedName>
        <fullName>WD repeat and SOCS box-containing protein 1</fullName>
        <shortName>WSB-1</shortName>
    </recommendedName>
    <alternativeName>
        <fullName>SOCS box-containing WD protein SWiP-1</fullName>
    </alternativeName>
</protein>
<evidence type="ECO:0000250" key="1"/>
<evidence type="ECO:0000255" key="2">
    <source>
        <dbReference type="PROSITE-ProRule" id="PRU00194"/>
    </source>
</evidence>
<evidence type="ECO:0000269" key="3">
    <source>
    </source>
</evidence>
<evidence type="ECO:0000269" key="4">
    <source>
    </source>
</evidence>
<evidence type="ECO:0000269" key="5">
    <source>
    </source>
</evidence>
<evidence type="ECO:0000269" key="6">
    <source>
    </source>
</evidence>
<evidence type="ECO:0000269" key="7">
    <source>
    </source>
</evidence>
<evidence type="ECO:0000303" key="8">
    <source>
    </source>
</evidence>
<evidence type="ECO:0000303" key="9">
    <source ref="2"/>
</evidence>
<evidence type="ECO:0000303" key="10">
    <source ref="3"/>
</evidence>
<evidence type="ECO:0000305" key="11"/>
<accession>Q9Y6I7</accession>
<accession>Q9NRB1</accession>
<accession>Q9UBH9</accession>
<accession>Q9UG25</accession>
<accession>Q9UNN6</accession>
<accession>Q9Y656</accession>
<reference key="1">
    <citation type="journal article" date="1999" name="Mech. Dev.">
        <title>SWiP-1: novel SOCS box containing WD-protein regulated by signalling centres and by Shh during development.</title>
        <authorList>
            <person name="Vasiliauskas D."/>
            <person name="Hancock S."/>
            <person name="Stern C.D."/>
        </authorList>
    </citation>
    <scope>NUCLEOTIDE SEQUENCE [MRNA] (ISOFORM 1)</scope>
</reference>
<reference key="2">
    <citation type="submission" date="1998-11" db="EMBL/GenBank/DDBJ databases">
        <title>Human wsb-1 isoform gene.</title>
        <authorList>
            <person name="Peng Y."/>
            <person name="Song H."/>
            <person name="Dai M."/>
            <person name="Huang Q."/>
            <person name="Mao Y."/>
            <person name="Zhang Q."/>
            <person name="Mao M."/>
            <person name="Fu G."/>
            <person name="Luo M."/>
            <person name="Chen J."/>
            <person name="Hu R."/>
        </authorList>
    </citation>
    <scope>NUCLEOTIDE SEQUENCE [MRNA] (ISOFORM 4)</scope>
    <source>
        <tissue>Pituitary</tissue>
    </source>
</reference>
<reference key="3">
    <citation type="submission" date="2000-03" db="EMBL/GenBank/DDBJ databases">
        <authorList>
            <person name="Zhang J.W."/>
            <person name="Liu T.X."/>
            <person name="Shen Y."/>
            <person name="Chen S.J."/>
            <person name="Chen Z."/>
        </authorList>
    </citation>
    <scope>NUCLEOTIDE SEQUENCE [MRNA] (ISOFORMS 1 AND 2)</scope>
</reference>
<reference key="4">
    <citation type="journal article" date="2001" name="Genome Res.">
        <title>Towards a catalog of human genes and proteins: sequencing and analysis of 500 novel complete protein coding human cDNAs.</title>
        <authorList>
            <person name="Wiemann S."/>
            <person name="Weil B."/>
            <person name="Wellenreuther R."/>
            <person name="Gassenhuber J."/>
            <person name="Glassl S."/>
            <person name="Ansorge W."/>
            <person name="Boecher M."/>
            <person name="Bloecker H."/>
            <person name="Bauersachs S."/>
            <person name="Blum H."/>
            <person name="Lauber J."/>
            <person name="Duesterhoeft A."/>
            <person name="Beyer A."/>
            <person name="Koehrer K."/>
            <person name="Strack N."/>
            <person name="Mewes H.-W."/>
            <person name="Ottenwaelder B."/>
            <person name="Obermaier B."/>
            <person name="Tampe J."/>
            <person name="Heubner D."/>
            <person name="Wambutt R."/>
            <person name="Korn B."/>
            <person name="Klein M."/>
            <person name="Poustka A."/>
        </authorList>
    </citation>
    <scope>NUCLEOTIDE SEQUENCE [LARGE SCALE MRNA] (ISOFORM 1)</scope>
    <scope>VARIANT SER-16</scope>
    <source>
        <tissue>Brain</tissue>
    </source>
</reference>
<reference key="5">
    <citation type="journal article" date="2000" name="Proc. Natl. Acad. Sci. U.S.A.">
        <title>Gene expression profiling in the human hypothalamus-pituitary-adrenal axis and full-length cDNA cloning.</title>
        <authorList>
            <person name="Hu R.-M."/>
            <person name="Han Z.-G."/>
            <person name="Song H.-D."/>
            <person name="Peng Y.-D."/>
            <person name="Huang Q.-H."/>
            <person name="Ren S.-X."/>
            <person name="Gu Y.-J."/>
            <person name="Huang C.-H."/>
            <person name="Li Y.-B."/>
            <person name="Jiang C.-L."/>
            <person name="Fu G."/>
            <person name="Zhang Q.-H."/>
            <person name="Gu B.-W."/>
            <person name="Dai M."/>
            <person name="Mao Y.-F."/>
            <person name="Gao G.-F."/>
            <person name="Rong R."/>
            <person name="Ye M."/>
            <person name="Zhou J."/>
            <person name="Xu S.-H."/>
            <person name="Gu J."/>
            <person name="Shi J.-X."/>
            <person name="Jin W.-R."/>
            <person name="Zhang C.-K."/>
            <person name="Wu T.-M."/>
            <person name="Huang G.-Y."/>
            <person name="Chen Z."/>
            <person name="Chen M.-D."/>
            <person name="Chen J.-L."/>
        </authorList>
    </citation>
    <scope>NUCLEOTIDE SEQUENCE [LARGE SCALE MRNA] (ISOFORM 1)</scope>
    <scope>VARIANT SER-16</scope>
    <source>
        <tissue>Hypothalamus</tissue>
    </source>
</reference>
<reference key="6">
    <citation type="submission" date="1998-11" db="EMBL/GenBank/DDBJ databases">
        <authorList>
            <person name="Song H."/>
            <person name="Peng Y."/>
            <person name="Dai M."/>
            <person name="Huang Q."/>
            <person name="Mao Y."/>
            <person name="Zhang Q."/>
            <person name="Mao M."/>
            <person name="Fu G."/>
            <person name="Luo M."/>
            <person name="Chen J."/>
            <person name="Hu R."/>
        </authorList>
    </citation>
    <scope>NUCLEOTIDE SEQUENCE [MRNA] (ISOFORM 1)</scope>
    <source>
        <tissue>Pituitary</tissue>
    </source>
</reference>
<reference key="7">
    <citation type="journal article" date="2007" name="BMC Genomics">
        <title>The full-ORF clone resource of the German cDNA consortium.</title>
        <authorList>
            <person name="Bechtel S."/>
            <person name="Rosenfelder H."/>
            <person name="Duda A."/>
            <person name="Schmidt C.P."/>
            <person name="Ernst U."/>
            <person name="Wellenreuther R."/>
            <person name="Mehrle A."/>
            <person name="Schuster C."/>
            <person name="Bahr A."/>
            <person name="Bloecker H."/>
            <person name="Heubner D."/>
            <person name="Hoerlein A."/>
            <person name="Michel G."/>
            <person name="Wedler H."/>
            <person name="Koehrer K."/>
            <person name="Ottenwaelder B."/>
            <person name="Poustka A."/>
            <person name="Wiemann S."/>
            <person name="Schupp I."/>
        </authorList>
    </citation>
    <scope>NUCLEOTIDE SEQUENCE [LARGE SCALE MRNA] (ISOFORM 3)</scope>
    <source>
        <tissue>Brain</tissue>
    </source>
</reference>
<reference key="8">
    <citation type="journal article" date="2004" name="Genome Res.">
        <title>The status, quality, and expansion of the NIH full-length cDNA project: the Mammalian Gene Collection (MGC).</title>
        <authorList>
            <consortium name="The MGC Project Team"/>
        </authorList>
    </citation>
    <scope>NUCLEOTIDE SEQUENCE [LARGE SCALE MRNA] (ISOFORM 1)</scope>
    <source>
        <tissue>Colon</tissue>
    </source>
</reference>
<reference key="9">
    <citation type="journal article" date="2004" name="Genes Dev.">
        <title>VHL-box and SOCS-box domains determine binding specificity for Cul2-Rbx1 and Cul5-Rbx2 modules of ubiquitin ligases.</title>
        <authorList>
            <person name="Kamura T."/>
            <person name="Maenaka K."/>
            <person name="Kotoshiba S."/>
            <person name="Matsumoto M."/>
            <person name="Kohda D."/>
            <person name="Conaway R.C."/>
            <person name="Conaway J.W."/>
            <person name="Nakayama K.I."/>
        </authorList>
    </citation>
    <scope>FUNCTION IN AN E3 UBIQUITIN-PROTEIN LIGASE COMPLEX</scope>
    <scope>IDENTIFICATION BY MASS SPECTROMETRY</scope>
    <scope>INTERACTION WITH CUL5; RNF7; ELOB AND ELOC</scope>
</reference>
<reference key="10">
    <citation type="journal article" date="2005" name="Nat. Cell Biol.">
        <title>The Hedgehog-inducible ubiquitin ligase subunit WSB-1 modulates thyroid hormone activation and PTHrP secretion in the developing growth plate.</title>
        <authorList>
            <person name="Dentice M."/>
            <person name="Bandyopadhyay A."/>
            <person name="Gereben B."/>
            <person name="Callebaut I."/>
            <person name="Christoffolete M.A."/>
            <person name="Kim B.W."/>
            <person name="Nissim S."/>
            <person name="Mornon J.P."/>
            <person name="Zavacki A.M."/>
            <person name="Zeold A."/>
            <person name="Capelo L.P."/>
            <person name="Curcio-Morelli C."/>
            <person name="Ribeiro R."/>
            <person name="Harney J.W."/>
            <person name="Tabin C.J."/>
            <person name="Bianco A.C."/>
        </authorList>
    </citation>
    <scope>FUNCTION</scope>
    <scope>SUBUNIT</scope>
    <scope>INTERACTION WITH DIO2</scope>
</reference>
<reference key="11">
    <citation type="journal article" date="2008" name="J. Biol. Chem.">
        <title>Ubiquitination and degradation of homeodomain-interacting protein kinase 2 by WD40 repeat/SOCS box protein WSB-1.</title>
        <authorList>
            <person name="Choi D.W."/>
            <person name="Seo Y.-M."/>
            <person name="Kim E.-A."/>
            <person name="Sung K.S."/>
            <person name="Ahn J.W."/>
            <person name="Park S.-J."/>
            <person name="Lee S.-R."/>
            <person name="Choi C.Y."/>
        </authorList>
    </citation>
    <scope>FUNCTION</scope>
    <scope>INTERACTION WITH HIPK2</scope>
</reference>
<name>WSB1_HUMAN</name>
<organism>
    <name type="scientific">Homo sapiens</name>
    <name type="common">Human</name>
    <dbReference type="NCBI Taxonomy" id="9606"/>
    <lineage>
        <taxon>Eukaryota</taxon>
        <taxon>Metazoa</taxon>
        <taxon>Chordata</taxon>
        <taxon>Craniata</taxon>
        <taxon>Vertebrata</taxon>
        <taxon>Euteleostomi</taxon>
        <taxon>Mammalia</taxon>
        <taxon>Eutheria</taxon>
        <taxon>Euarchontoglires</taxon>
        <taxon>Primates</taxon>
        <taxon>Haplorrhini</taxon>
        <taxon>Catarrhini</taxon>
        <taxon>Hominidae</taxon>
        <taxon>Homo</taxon>
    </lineage>
</organism>
<proteinExistence type="evidence at protein level"/>
<sequence length="421" mass="47432">MASFPPRVNEKEIVRLRTIGELLAPAAPFDKKCGRENWTVAFAPDGSYFAWSQGHRTVKLVPWSQCLQNFLLHGTKNVTNSSSLRLPRQNSDGGQKNKPREHIIDCGDIVWSLAFGSSVPEKQSRCVNIEWHRFRFGQDQLLLATGLNNGRIKIWDVYTGKLLLNLVDHTEVVRDLTFAPDGSLILVSASRDKTLRVWDLKDDGNMMKVLRGHQNWVYSCAFSPDSSMLCSVGASKAVFLWNMDKYTMIRKLEGHHHDVVACDFSPDGALLATASYDTRVYIWDPHNGDILMEFGHLFPPPTPIFAGGANDRWVRSVSFSHDGLHVASLADDKMVRFWRIDEDYPVQVAPLSNGLCCAFSTDGSVLAAGTHDGSVYFWATPRQVPSLQHLCRMSIRRVMPTQEVQELPIPSKLLEFLSYRI</sequence>
<comment type="function">
    <text evidence="5 6 7">Probable substrate-recognition component of a SCF-like ECS (Elongin-Cullin-SOCS-box protein) E3 ubiquitin ligase complex which mediates the ubiquitination and subsequent proteasomal degradation of target proteins. Recognizes type II iodothyronine deiodinase/DIO2. Confers constitutive instability to HIPK2 through proteasomal degradation.</text>
</comment>
<comment type="pathway">
    <text>Protein modification; protein ubiquitination.</text>
</comment>
<comment type="subunit">
    <text evidence="5 6 7">Interacts with DIO2. Component of the probable ECS(WSB1) E3 ubiquitin ligase complex which contains CUL5, RNF7/RBX2, Elongin BC complex and WSB1. Component of a probable ECS-like E3 ubiquitin-protein ligase complex which contains CUL5, RBX1, Elongin BC complex and WSB1. Interacts with CUL5, RNF7, ELOB and ELOC. Binds to HIPK2 through WD40 repeats.</text>
</comment>
<comment type="interaction">
    <interactant intactId="EBI-1171494">
        <id>Q9Y6I7</id>
    </interactant>
    <interactant intactId="EBI-5323863">
        <id>Q5S007</id>
        <label>LRRK2</label>
    </interactant>
    <organismsDiffer>false</organismsDiffer>
    <experiments>5</experiments>
</comment>
<comment type="interaction">
    <interactant intactId="EBI-1171494">
        <id>Q9Y6I7</id>
    </interactant>
    <interactant intactId="EBI-12157263">
        <id>P40337-2</id>
        <label>VHL</label>
    </interactant>
    <organismsDiffer>false</organismsDiffer>
    <experiments>3</experiments>
</comment>
<comment type="interaction">
    <interactant intactId="EBI-1171494">
        <id>Q9Y6I7</id>
    </interactant>
    <interactant intactId="EBI-366905">
        <id>Q9QZR5</id>
        <label>Hipk2</label>
    </interactant>
    <organismsDiffer>true</organismsDiffer>
    <experiments>5</experiments>
</comment>
<comment type="alternative products">
    <event type="alternative splicing"/>
    <isoform>
        <id>Q9Y6I7-1</id>
        <name>1</name>
        <sequence type="displayed"/>
    </isoform>
    <isoform>
        <id>Q9Y6I7-2</id>
        <name>2</name>
        <sequence type="described" ref="VSP_006792"/>
    </isoform>
    <isoform>
        <id>Q9Y6I7-3</id>
        <name>3</name>
        <sequence type="described" ref="VSP_039111 VSP_039112"/>
    </isoform>
    <isoform>
        <id>Q9Y6I7-4</id>
        <name>4</name>
        <sequence type="described" ref="VSP_053402 VSP_053403"/>
    </isoform>
</comment>
<comment type="domain">
    <text evidence="1">The SOCS box domain mediates the interaction with the Elongin BC complex, an adapter module in different E3 ubiquitin ligase complexes.</text>
</comment>
<dbReference type="EMBL" id="AF072880">
    <property type="protein sequence ID" value="AAD28808.1"/>
    <property type="molecule type" value="mRNA"/>
</dbReference>
<dbReference type="EMBL" id="AF106684">
    <property type="protein sequence ID" value="AAD43037.1"/>
    <property type="molecule type" value="mRNA"/>
</dbReference>
<dbReference type="EMBL" id="AF069313">
    <property type="protein sequence ID" value="AAD20954.2"/>
    <property type="molecule type" value="mRNA"/>
</dbReference>
<dbReference type="EMBL" id="AF240696">
    <property type="protein sequence ID" value="AAF82746.1"/>
    <property type="molecule type" value="mRNA"/>
</dbReference>
<dbReference type="EMBL" id="AL110243">
    <property type="protein sequence ID" value="CAB53693.1"/>
    <property type="molecule type" value="mRNA"/>
</dbReference>
<dbReference type="EMBL" id="AF112205">
    <property type="protein sequence ID" value="AAF17193.1"/>
    <property type="molecule type" value="mRNA"/>
</dbReference>
<dbReference type="EMBL" id="AF106683">
    <property type="protein sequence ID" value="AAD43036.1"/>
    <property type="molecule type" value="mRNA"/>
</dbReference>
<dbReference type="EMBL" id="AL110269">
    <property type="protein sequence ID" value="CAB53708.2"/>
    <property type="molecule type" value="mRNA"/>
</dbReference>
<dbReference type="EMBL" id="BC021110">
    <property type="protein sequence ID" value="AAH21110.1"/>
    <property type="molecule type" value="mRNA"/>
</dbReference>
<dbReference type="CCDS" id="CCDS11220.1">
    <molecule id="Q9Y6I7-1"/>
</dbReference>
<dbReference type="CCDS" id="CCDS11221.1">
    <molecule id="Q9Y6I7-2"/>
</dbReference>
<dbReference type="PIR" id="T14773">
    <property type="entry name" value="T14773"/>
</dbReference>
<dbReference type="PIR" id="T14788">
    <property type="entry name" value="T14788"/>
</dbReference>
<dbReference type="RefSeq" id="NP_056441.6">
    <molecule id="Q9Y6I7-1"/>
    <property type="nucleotide sequence ID" value="NM_015626.9"/>
</dbReference>
<dbReference type="RefSeq" id="NP_599027.1">
    <molecule id="Q9Y6I7-2"/>
    <property type="nucleotide sequence ID" value="NM_134265.4"/>
</dbReference>
<dbReference type="RefSeq" id="XP_016879924.1">
    <property type="nucleotide sequence ID" value="XM_017024435.1"/>
</dbReference>
<dbReference type="RefSeq" id="XP_016879925.1">
    <property type="nucleotide sequence ID" value="XM_017024436.1"/>
</dbReference>
<dbReference type="SMR" id="Q9Y6I7"/>
<dbReference type="BioGRID" id="117560">
    <property type="interactions" value="27"/>
</dbReference>
<dbReference type="CORUM" id="Q9Y6I7"/>
<dbReference type="FunCoup" id="Q9Y6I7">
    <property type="interactions" value="933"/>
</dbReference>
<dbReference type="IntAct" id="Q9Y6I7">
    <property type="interactions" value="10"/>
</dbReference>
<dbReference type="MINT" id="Q9Y6I7"/>
<dbReference type="STRING" id="9606.ENSP00000262394"/>
<dbReference type="GlyGen" id="Q9Y6I7">
    <property type="glycosylation" value="1 site"/>
</dbReference>
<dbReference type="iPTMnet" id="Q9Y6I7"/>
<dbReference type="PhosphoSitePlus" id="Q9Y6I7"/>
<dbReference type="BioMuta" id="WSB1"/>
<dbReference type="DMDM" id="20532298"/>
<dbReference type="jPOST" id="Q9Y6I7"/>
<dbReference type="MassIVE" id="Q9Y6I7"/>
<dbReference type="PaxDb" id="9606-ENSP00000262394"/>
<dbReference type="PeptideAtlas" id="Q9Y6I7"/>
<dbReference type="ProteomicsDB" id="86693">
    <molecule id="Q9Y6I7-1"/>
</dbReference>
<dbReference type="ProteomicsDB" id="86694">
    <molecule id="Q9Y6I7-2"/>
</dbReference>
<dbReference type="ProteomicsDB" id="86695">
    <molecule id="Q9Y6I7-3"/>
</dbReference>
<dbReference type="Antibodypedia" id="1139">
    <property type="antibodies" value="152 antibodies from 23 providers"/>
</dbReference>
<dbReference type="DNASU" id="26118"/>
<dbReference type="Ensembl" id="ENST00000262394.7">
    <molecule id="Q9Y6I7-1"/>
    <property type="protein sequence ID" value="ENSP00000262394.2"/>
    <property type="gene ID" value="ENSG00000109046.15"/>
</dbReference>
<dbReference type="Ensembl" id="ENST00000348811.6">
    <molecule id="Q9Y6I7-2"/>
    <property type="protein sequence ID" value="ENSP00000327055.2"/>
    <property type="gene ID" value="ENSG00000109046.15"/>
</dbReference>
<dbReference type="GeneID" id="26118"/>
<dbReference type="KEGG" id="hsa:26118"/>
<dbReference type="MANE-Select" id="ENST00000262394.7">
    <property type="protein sequence ID" value="ENSP00000262394.2"/>
    <property type="RefSeq nucleotide sequence ID" value="NM_015626.10"/>
    <property type="RefSeq protein sequence ID" value="NP_056441.6"/>
</dbReference>
<dbReference type="UCSC" id="uc002gzd.2">
    <molecule id="Q9Y6I7-1"/>
    <property type="organism name" value="human"/>
</dbReference>
<dbReference type="AGR" id="HGNC:19221"/>
<dbReference type="CTD" id="26118"/>
<dbReference type="DisGeNET" id="26118"/>
<dbReference type="GeneCards" id="WSB1"/>
<dbReference type="HGNC" id="HGNC:19221">
    <property type="gene designation" value="WSB1"/>
</dbReference>
<dbReference type="HPA" id="ENSG00000109046">
    <property type="expression patterns" value="Low tissue specificity"/>
</dbReference>
<dbReference type="MIM" id="610091">
    <property type="type" value="gene"/>
</dbReference>
<dbReference type="neXtProt" id="NX_Q9Y6I7"/>
<dbReference type="OpenTargets" id="ENSG00000109046"/>
<dbReference type="PharmGKB" id="PA134867554"/>
<dbReference type="VEuPathDB" id="HostDB:ENSG00000109046"/>
<dbReference type="eggNOG" id="KOG0266">
    <property type="taxonomic scope" value="Eukaryota"/>
</dbReference>
<dbReference type="GeneTree" id="ENSGT00890000139406"/>
<dbReference type="HOGENOM" id="CLU_056876_0_0_1"/>
<dbReference type="InParanoid" id="Q9Y6I7"/>
<dbReference type="OMA" id="YVWDPHT"/>
<dbReference type="OrthoDB" id="538223at2759"/>
<dbReference type="PAN-GO" id="Q9Y6I7">
    <property type="GO annotations" value="1 GO annotation based on evolutionary models"/>
</dbReference>
<dbReference type="PhylomeDB" id="Q9Y6I7"/>
<dbReference type="TreeFam" id="TF329216"/>
<dbReference type="PathwayCommons" id="Q9Y6I7"/>
<dbReference type="Reactome" id="R-HSA-8951664">
    <property type="pathway name" value="Neddylation"/>
</dbReference>
<dbReference type="Reactome" id="R-HSA-983168">
    <property type="pathway name" value="Antigen processing: Ubiquitination &amp; Proteasome degradation"/>
</dbReference>
<dbReference type="SignaLink" id="Q9Y6I7"/>
<dbReference type="SIGNOR" id="Q9Y6I7"/>
<dbReference type="UniPathway" id="UPA00143"/>
<dbReference type="BioGRID-ORCS" id="26118">
    <property type="hits" value="27 hits in 1196 CRISPR screens"/>
</dbReference>
<dbReference type="ChiTaRS" id="WSB1">
    <property type="organism name" value="human"/>
</dbReference>
<dbReference type="GeneWiki" id="WSB1"/>
<dbReference type="GenomeRNAi" id="26118"/>
<dbReference type="Pharos" id="Q9Y6I7">
    <property type="development level" value="Tbio"/>
</dbReference>
<dbReference type="PRO" id="PR:Q9Y6I7"/>
<dbReference type="Proteomes" id="UP000005640">
    <property type="component" value="Chromosome 17"/>
</dbReference>
<dbReference type="RNAct" id="Q9Y6I7">
    <property type="molecule type" value="protein"/>
</dbReference>
<dbReference type="Bgee" id="ENSG00000109046">
    <property type="expression patterns" value="Expressed in corpus callosum and 207 other cell types or tissues"/>
</dbReference>
<dbReference type="ExpressionAtlas" id="Q9Y6I7">
    <property type="expression patterns" value="baseline and differential"/>
</dbReference>
<dbReference type="GO" id="GO:0005829">
    <property type="term" value="C:cytosol"/>
    <property type="evidence" value="ECO:0000304"/>
    <property type="project" value="Reactome"/>
</dbReference>
<dbReference type="GO" id="GO:0061630">
    <property type="term" value="F:ubiquitin protein ligase activity"/>
    <property type="evidence" value="ECO:0007669"/>
    <property type="project" value="Ensembl"/>
</dbReference>
<dbReference type="GO" id="GO:0035556">
    <property type="term" value="P:intracellular signal transduction"/>
    <property type="evidence" value="ECO:0007669"/>
    <property type="project" value="InterPro"/>
</dbReference>
<dbReference type="GO" id="GO:0140454">
    <property type="term" value="P:protein aggregate center assembly"/>
    <property type="evidence" value="ECO:0007669"/>
    <property type="project" value="Ensembl"/>
</dbReference>
<dbReference type="GO" id="GO:0044314">
    <property type="term" value="P:protein K27-linked ubiquitination"/>
    <property type="evidence" value="ECO:0007669"/>
    <property type="project" value="Ensembl"/>
</dbReference>
<dbReference type="GO" id="GO:0000209">
    <property type="term" value="P:protein polyubiquitination"/>
    <property type="evidence" value="ECO:0000318"/>
    <property type="project" value="GO_Central"/>
</dbReference>
<dbReference type="CDD" id="cd03746">
    <property type="entry name" value="SOCS_WSB1_SWIP1"/>
    <property type="match status" value="1"/>
</dbReference>
<dbReference type="CDD" id="cd00200">
    <property type="entry name" value="WD40"/>
    <property type="match status" value="1"/>
</dbReference>
<dbReference type="FunFam" id="1.10.750.20:FF:000003">
    <property type="entry name" value="WD repeat and SOCS box-containing 1, isoform CRA_b"/>
    <property type="match status" value="1"/>
</dbReference>
<dbReference type="FunFam" id="2.130.10.10:FF:000588">
    <property type="entry name" value="WD repeat and SOCS box-containing 1, isoform CRA_b"/>
    <property type="match status" value="1"/>
</dbReference>
<dbReference type="FunFam" id="2.130.10.10:FF:000803">
    <property type="entry name" value="WD repeat and SOCS box-containing 1, isoform CRA_b"/>
    <property type="match status" value="1"/>
</dbReference>
<dbReference type="FunFam" id="2.130.10.10:FF:000804">
    <property type="entry name" value="WD repeat and SOCS box-containing 1, isoform CRA_b"/>
    <property type="match status" value="1"/>
</dbReference>
<dbReference type="Gene3D" id="1.10.750.20">
    <property type="entry name" value="SOCS box"/>
    <property type="match status" value="1"/>
</dbReference>
<dbReference type="Gene3D" id="2.130.10.10">
    <property type="entry name" value="YVTN repeat-like/Quinoprotein amine dehydrogenase"/>
    <property type="match status" value="3"/>
</dbReference>
<dbReference type="InterPro" id="IPR020472">
    <property type="entry name" value="G-protein_beta_WD-40_rep"/>
</dbReference>
<dbReference type="InterPro" id="IPR001496">
    <property type="entry name" value="SOCS_box"/>
</dbReference>
<dbReference type="InterPro" id="IPR036036">
    <property type="entry name" value="SOCS_box-like_dom_sf"/>
</dbReference>
<dbReference type="InterPro" id="IPR015943">
    <property type="entry name" value="WD40/YVTN_repeat-like_dom_sf"/>
</dbReference>
<dbReference type="InterPro" id="IPR019775">
    <property type="entry name" value="WD40_repeat_CS"/>
</dbReference>
<dbReference type="InterPro" id="IPR036322">
    <property type="entry name" value="WD40_repeat_dom_sf"/>
</dbReference>
<dbReference type="InterPro" id="IPR001680">
    <property type="entry name" value="WD40_rpt"/>
</dbReference>
<dbReference type="InterPro" id="IPR051983">
    <property type="entry name" value="WSB_SOCS-box_domain"/>
</dbReference>
<dbReference type="PANTHER" id="PTHR15622:SF12">
    <property type="entry name" value="WD REPEAT AND SOCS BOX-CONTAINING PROTEIN 1"/>
    <property type="match status" value="1"/>
</dbReference>
<dbReference type="PANTHER" id="PTHR15622">
    <property type="entry name" value="WD40 REPEAT PROTEIN"/>
    <property type="match status" value="1"/>
</dbReference>
<dbReference type="Pfam" id="PF07525">
    <property type="entry name" value="SOCS_box"/>
    <property type="match status" value="1"/>
</dbReference>
<dbReference type="Pfam" id="PF00400">
    <property type="entry name" value="WD40"/>
    <property type="match status" value="5"/>
</dbReference>
<dbReference type="PRINTS" id="PR00320">
    <property type="entry name" value="GPROTEINBRPT"/>
</dbReference>
<dbReference type="SMART" id="SM00253">
    <property type="entry name" value="SOCS"/>
    <property type="match status" value="1"/>
</dbReference>
<dbReference type="SMART" id="SM00969">
    <property type="entry name" value="SOCS_box"/>
    <property type="match status" value="1"/>
</dbReference>
<dbReference type="SMART" id="SM00320">
    <property type="entry name" value="WD40"/>
    <property type="match status" value="6"/>
</dbReference>
<dbReference type="SUPFAM" id="SSF158235">
    <property type="entry name" value="SOCS box-like"/>
    <property type="match status" value="1"/>
</dbReference>
<dbReference type="SUPFAM" id="SSF50978">
    <property type="entry name" value="WD40 repeat-like"/>
    <property type="match status" value="1"/>
</dbReference>
<dbReference type="PROSITE" id="PS50225">
    <property type="entry name" value="SOCS"/>
    <property type="match status" value="1"/>
</dbReference>
<dbReference type="PROSITE" id="PS00678">
    <property type="entry name" value="WD_REPEATS_1"/>
    <property type="match status" value="2"/>
</dbReference>
<dbReference type="PROSITE" id="PS50082">
    <property type="entry name" value="WD_REPEATS_2"/>
    <property type="match status" value="6"/>
</dbReference>
<dbReference type="PROSITE" id="PS50294">
    <property type="entry name" value="WD_REPEATS_REGION"/>
    <property type="match status" value="1"/>
</dbReference>
<feature type="chain" id="PRO_0000051457" description="WD repeat and SOCS box-containing protein 1">
    <location>
        <begin position="1"/>
        <end position="421"/>
    </location>
</feature>
<feature type="repeat" description="WD 1">
    <location>
        <begin position="32"/>
        <end position="71"/>
    </location>
</feature>
<feature type="repeat" description="WD 2">
    <location>
        <begin position="124"/>
        <end position="165"/>
    </location>
</feature>
<feature type="repeat" description="WD 3">
    <location>
        <begin position="168"/>
        <end position="208"/>
    </location>
</feature>
<feature type="repeat" description="WD 4">
    <location>
        <begin position="212"/>
        <end position="251"/>
    </location>
</feature>
<feature type="repeat" description="WD 5">
    <location>
        <begin position="254"/>
        <end position="293"/>
    </location>
</feature>
<feature type="repeat" description="WD 6">
    <location>
        <begin position="309"/>
        <end position="346"/>
    </location>
</feature>
<feature type="domain" description="SOCS box" evidence="2">
    <location>
        <begin position="372"/>
        <end position="421"/>
    </location>
</feature>
<feature type="splice variant" id="VSP_053402" description="In isoform 4." evidence="9">
    <original>MASFPPRVNEKEIVRLRTIGELLAPAAPFDKKCGR</original>
    <variation>MLNIILIKFSSFSIRCAILSSVCLNEAITFAFLLQ</variation>
    <location>
        <begin position="1"/>
        <end position="35"/>
    </location>
</feature>
<feature type="splice variant" id="VSP_006792" description="In isoform 2." evidence="10">
    <location>
        <begin position="14"/>
        <end position="159"/>
    </location>
</feature>
<feature type="splice variant" id="VSP_053403" description="In isoform 4." evidence="9">
    <location>
        <begin position="36"/>
        <end position="237"/>
    </location>
</feature>
<feature type="splice variant" id="VSP_039111" description="In isoform 3." evidence="8">
    <original>FLWNMD</original>
    <variation>VAAILV</variation>
    <location>
        <begin position="239"/>
        <end position="244"/>
    </location>
</feature>
<feature type="splice variant" id="VSP_039112" description="In isoform 3." evidence="8">
    <location>
        <begin position="245"/>
        <end position="421"/>
    </location>
</feature>
<feature type="sequence variant" id="VAR_024701" description="In dbSNP:rs6561." evidence="3 4">
    <original>L</original>
    <variation>S</variation>
    <location>
        <position position="16"/>
    </location>
</feature>
<feature type="sequence conflict" description="In Ref. 7; CAB53708." evidence="11" ref="7">
    <original>N</original>
    <variation>S</variation>
    <location>
        <position position="149"/>
    </location>
</feature>
<feature type="sequence conflict" description="In Ref. 7; CAB53708." evidence="11" ref="7">
    <original>E</original>
    <variation>G</variation>
    <location>
        <position position="171"/>
    </location>
</feature>
<feature type="sequence conflict" description="In Ref. 6; AAD43036." evidence="11" ref="6">
    <original>F</original>
    <variation>L</variation>
    <location>
        <position position="178"/>
    </location>
</feature>
<feature type="sequence conflict" description="In Ref. 7; CAB53708." evidence="11" ref="7">
    <original>K</original>
    <variation>R</variation>
    <location>
        <position position="201"/>
    </location>
</feature>
<feature type="sequence conflict" description="In Ref. 6; AAD43036." evidence="11" ref="6">
    <original>S</original>
    <variation>P</variation>
    <location>
        <position position="231"/>
    </location>
</feature>
<keyword id="KW-0025">Alternative splicing</keyword>
<keyword id="KW-1267">Proteomics identification</keyword>
<keyword id="KW-1185">Reference proteome</keyword>
<keyword id="KW-0677">Repeat</keyword>
<keyword id="KW-0833">Ubl conjugation pathway</keyword>
<keyword id="KW-0853">WD repeat</keyword>
<gene>
    <name type="primary">WSB1</name>
    <name type="synonym">SWIP1</name>
</gene>